<comment type="function">
    <text evidence="2 3">Tethering component of the holoenzyme telomerase ribonucleoprotein (RNP) complex (PubMed:23552895). Telomerase is an essential ribonucleoprotein enzyme that copies new telomeric repeats onto chromosome ends by repetitively synthesizing the short telomere-repeat sequence 5'-TTGGGG-3' using an RNA template component TER (PubMed:23552895). In the telomerase holoenzyme complex, acts as a hub that anchors the two heterotrimeric subcomplexes with the catalytic core (PubMed:23552895, PubMed:23918804).</text>
</comment>
<comment type="subunit">
    <text evidence="1 2 4 5">Component of the telomerase holoenzyme complex, composed of the catalytic core (the catalytic subunit TERT, the telomerase RNA template component TER and TAP65/p65), which is associated with two heterotrimeric subcomplexes: (i) the replication protein A (RPA)-related subcomplex, composed of TEB1, RPA2/TEB2 and RPA3/TEB3 and (ii) the CST-like subcomplex, composed of TAP75/p75, TAP45/p45 and TAP19/p19 (PubMed:19941821, PubMed:23552895, PubMed:26472759, PubMed:29775593). TEB1 and the CST-like subcomplex are tethered to the catalytic core by TAP50/p50 (PubMed:19941821, PubMed:23552895, PubMed:26472759, PubMed:29775593).</text>
</comment>
<comment type="subcellular location">
    <subcellularLocation>
        <location evidence="7">Chromosome</location>
        <location evidence="7">Telomere</location>
    </subcellularLocation>
</comment>
<comment type="disruption phenotype">
    <text evidence="1">Critically short telomeres.</text>
</comment>
<proteinExistence type="evidence at protein level"/>
<dbReference type="EMBL" id="EU873083">
    <property type="protein sequence ID" value="ACJ61513.1"/>
    <property type="molecule type" value="mRNA"/>
</dbReference>
<dbReference type="EMBL" id="GG662375">
    <property type="protein sequence ID" value="EAS05269.4"/>
    <property type="molecule type" value="Genomic_DNA"/>
</dbReference>
<dbReference type="RefSeq" id="XP_001025514.4">
    <property type="nucleotide sequence ID" value="XM_001025514.4"/>
</dbReference>
<dbReference type="PDB" id="7LMA">
    <property type="method" value="EM"/>
    <property type="resolution" value="3.30 A"/>
    <property type="chains" value="G=1-422"/>
</dbReference>
<dbReference type="PDB" id="7LMB">
    <property type="method" value="EM"/>
    <property type="resolution" value="3.80 A"/>
    <property type="chains" value="G=1-422"/>
</dbReference>
<dbReference type="PDB" id="7UY5">
    <property type="method" value="EM"/>
    <property type="resolution" value="3.50 A"/>
    <property type="chains" value="G=1-422"/>
</dbReference>
<dbReference type="PDB" id="7UY6">
    <property type="method" value="EM"/>
    <property type="resolution" value="2.90 A"/>
    <property type="chains" value="G=1-422"/>
</dbReference>
<dbReference type="PDB" id="7UY7">
    <property type="method" value="EM"/>
    <property type="resolution" value="4.20 A"/>
    <property type="chains" value="D=1-422"/>
</dbReference>
<dbReference type="PDB" id="7X5C">
    <property type="method" value="NMR"/>
    <property type="chains" value="B=230-243"/>
</dbReference>
<dbReference type="PDB" id="8GAP">
    <property type="method" value="EM"/>
    <property type="resolution" value="3.80 A"/>
    <property type="chains" value="G=1-422"/>
</dbReference>
<dbReference type="PDBsum" id="7LMA"/>
<dbReference type="PDBsum" id="7LMB"/>
<dbReference type="PDBsum" id="7UY5"/>
<dbReference type="PDBsum" id="7UY6"/>
<dbReference type="PDBsum" id="7UY7"/>
<dbReference type="PDBsum" id="7X5C"/>
<dbReference type="PDBsum" id="8GAP"/>
<dbReference type="EMDB" id="EMD-23437"/>
<dbReference type="EMDB" id="EMD-23439"/>
<dbReference type="EMDB" id="EMD-26863"/>
<dbReference type="EMDB" id="EMD-26865"/>
<dbReference type="EMDB" id="EMD-26866"/>
<dbReference type="EMDB" id="EMD-29903"/>
<dbReference type="SMR" id="D2CVN8"/>
<dbReference type="DIP" id="DIP-60204N"/>
<dbReference type="DIP" id="DIP-61865N"/>
<dbReference type="IntAct" id="D2CVN8">
    <property type="interactions" value="5"/>
</dbReference>
<dbReference type="STRING" id="312017.Q24BW8"/>
<dbReference type="EnsemblProtists" id="EAS05269">
    <property type="protein sequence ID" value="EAS05269"/>
    <property type="gene ID" value="TTHERM_01049190"/>
</dbReference>
<dbReference type="GeneID" id="7826301"/>
<dbReference type="KEGG" id="tet:TTHERM_01049190"/>
<dbReference type="HOGENOM" id="CLU_712698_0_0_1"/>
<dbReference type="InParanoid" id="D2CVN8"/>
<dbReference type="Proteomes" id="UP000009168">
    <property type="component" value="Unassembled WGS sequence"/>
</dbReference>
<dbReference type="GO" id="GO:0000781">
    <property type="term" value="C:chromosome, telomeric region"/>
    <property type="evidence" value="ECO:0007669"/>
    <property type="project" value="UniProtKB-SubCell"/>
</dbReference>
<dbReference type="GO" id="GO:0005697">
    <property type="term" value="C:telomerase holoenzyme complex"/>
    <property type="evidence" value="ECO:0000314"/>
    <property type="project" value="UniProtKB"/>
</dbReference>
<dbReference type="GO" id="GO:0007004">
    <property type="term" value="P:telomere maintenance via telomerase"/>
    <property type="evidence" value="ECO:0000315"/>
    <property type="project" value="UniProtKB"/>
</dbReference>
<reference key="1">
    <citation type="journal article" date="2009" name="Mol. Cell">
        <title>An RPA-related sequence-specific DNA-binding subunit of telomerase holoenzyme is required for elongation processivity and telomere maintenance.</title>
        <authorList>
            <person name="Min B."/>
            <person name="Collins K."/>
        </authorList>
    </citation>
    <scope>NUCLEOTIDE SEQUENCE [MRNA]</scope>
    <scope>IDENTIFICATION IN THE TELOMERASE HOLOENZYME</scope>
    <scope>DISRUPTION PHENOTYPE</scope>
    <source>
        <strain>SB210</strain>
    </source>
</reference>
<reference key="2">
    <citation type="journal article" date="2006" name="PLoS Biol.">
        <title>Macronuclear genome sequence of the ciliate Tetrahymena thermophila, a model eukaryote.</title>
        <authorList>
            <person name="Eisen J.A."/>
            <person name="Coyne R.S."/>
            <person name="Wu M."/>
            <person name="Wu D."/>
            <person name="Thiagarajan M."/>
            <person name="Wortman J.R."/>
            <person name="Badger J.H."/>
            <person name="Ren Q."/>
            <person name="Amedeo P."/>
            <person name="Jones K.M."/>
            <person name="Tallon L.J."/>
            <person name="Delcher A.L."/>
            <person name="Salzberg S.L."/>
            <person name="Silva J.C."/>
            <person name="Haas B.J."/>
            <person name="Majoros W.H."/>
            <person name="Farzad M."/>
            <person name="Carlton J.M."/>
            <person name="Smith R.K. Jr."/>
            <person name="Garg J."/>
            <person name="Pearlman R.E."/>
            <person name="Karrer K.M."/>
            <person name="Sun L."/>
            <person name="Manning G."/>
            <person name="Elde N.C."/>
            <person name="Turkewitz A.P."/>
            <person name="Asai D.J."/>
            <person name="Wilkes D.E."/>
            <person name="Wang Y."/>
            <person name="Cai H."/>
            <person name="Collins K."/>
            <person name="Stewart B.A."/>
            <person name="Lee S.R."/>
            <person name="Wilamowska K."/>
            <person name="Weinberg Z."/>
            <person name="Ruzzo W.L."/>
            <person name="Wloga D."/>
            <person name="Gaertig J."/>
            <person name="Frankel J."/>
            <person name="Tsao C.-C."/>
            <person name="Gorovsky M.A."/>
            <person name="Keeling P.J."/>
            <person name="Waller R.F."/>
            <person name="Patron N.J."/>
            <person name="Cherry J.M."/>
            <person name="Stover N.A."/>
            <person name="Krieger C.J."/>
            <person name="del Toro C."/>
            <person name="Ryder H.F."/>
            <person name="Williamson S.C."/>
            <person name="Barbeau R.A."/>
            <person name="Hamilton E.P."/>
            <person name="Orias E."/>
        </authorList>
    </citation>
    <scope>NUCLEOTIDE SEQUENCE [LARGE SCALE GENOMIC DNA]</scope>
    <source>
        <strain>SB210</strain>
    </source>
</reference>
<reference key="3">
    <citation type="journal article" date="2013" name="Mol. Cell. Biol.">
        <title>Tetrahymena telomerase holoenzyme assembly, activation, and inhibition by domains of the p50 central hub.</title>
        <authorList>
            <person name="Hong K."/>
            <person name="Upton H."/>
            <person name="Miracco E.J."/>
            <person name="Jiang J."/>
            <person name="Zhou Z.H."/>
            <person name="Feigon J."/>
            <person name="Collins K."/>
        </authorList>
    </citation>
    <scope>FUNCTION</scope>
</reference>
<reference key="4">
    <citation type="journal article" date="2013" name="Nature">
        <title>The architecture of Tetrahymena telomerase holoenzyme.</title>
        <authorList>
            <person name="Jiang J."/>
            <person name="Miracco E.J."/>
            <person name="Hong K."/>
            <person name="Eckert B."/>
            <person name="Chan H."/>
            <person name="Cash D.D."/>
            <person name="Min B."/>
            <person name="Zhou Z.H."/>
            <person name="Collins K."/>
            <person name="Feigon J."/>
        </authorList>
    </citation>
    <scope>STRUCTURE BY ELECTRON MICROSCOPY OF THE TELOMERASE HOLOENZYME</scope>
    <scope>FUNCTION</scope>
</reference>
<reference key="5">
    <citation type="journal article" date="2015" name="Science">
        <title>Structure of Tetrahymena telomerase reveals previously unknown subunits, functions, and interactions.</title>
        <authorList>
            <person name="Jiang J."/>
            <person name="Chan H."/>
            <person name="Cash D.D."/>
            <person name="Miracco E.J."/>
            <person name="Ogorzalek Loo R.R."/>
            <person name="Upton H.E."/>
            <person name="Cascio D."/>
            <person name="O'Brien Johnson R."/>
            <person name="Collins K."/>
            <person name="Loo J.A."/>
            <person name="Zhou Z.H."/>
            <person name="Feigon J."/>
        </authorList>
    </citation>
    <scope>STRUCTURE BY ELECTRON MICROSCOPY OF THE TELOMERASE HOLOENZYME</scope>
</reference>
<reference key="6">
    <citation type="journal article" date="2018" name="Cell">
        <title>Structure of telomerase with telomeric DNA.</title>
        <authorList>
            <person name="Jiang J."/>
            <person name="Wang Y."/>
            <person name="Susac L."/>
            <person name="Chan H."/>
            <person name="Basu R."/>
            <person name="Zhou Z.H."/>
            <person name="Feigon J."/>
        </authorList>
    </citation>
    <scope>STRUCTURE BY ELECTRON MICROSCOPY OF THE TELOMERASE HOLOENZYME IN COMPLEX WITH TELOMERIC DNA AND TER RNA</scope>
</reference>
<feature type="chain" id="PRO_0000449910" description="Telomerase-associated protein of 50 kDa">
    <location>
        <begin position="1"/>
        <end position="422"/>
    </location>
</feature>
<feature type="helix" evidence="11">
    <location>
        <begin position="2"/>
        <end position="6"/>
    </location>
</feature>
<feature type="helix" evidence="11">
    <location>
        <begin position="10"/>
        <end position="28"/>
    </location>
</feature>
<feature type="turn" evidence="10">
    <location>
        <begin position="29"/>
        <end position="31"/>
    </location>
</feature>
<feature type="helix" evidence="11">
    <location>
        <begin position="34"/>
        <end position="40"/>
    </location>
</feature>
<feature type="strand" evidence="9">
    <location>
        <begin position="43"/>
        <end position="45"/>
    </location>
</feature>
<feature type="strand" evidence="11">
    <location>
        <begin position="46"/>
        <end position="51"/>
    </location>
</feature>
<feature type="strand" evidence="11">
    <location>
        <begin position="58"/>
        <end position="66"/>
    </location>
</feature>
<feature type="turn" evidence="11">
    <location>
        <begin position="67"/>
        <end position="70"/>
    </location>
</feature>
<feature type="strand" evidence="11">
    <location>
        <begin position="71"/>
        <end position="76"/>
    </location>
</feature>
<feature type="strand" evidence="11">
    <location>
        <begin position="79"/>
        <end position="86"/>
    </location>
</feature>
<feature type="helix" evidence="11">
    <location>
        <begin position="88"/>
        <end position="93"/>
    </location>
</feature>
<feature type="strand" evidence="11">
    <location>
        <begin position="103"/>
        <end position="117"/>
    </location>
</feature>
<feature type="strand" evidence="11">
    <location>
        <begin position="120"/>
        <end position="135"/>
    </location>
</feature>
<feature type="strand" evidence="11">
    <location>
        <begin position="143"/>
        <end position="150"/>
    </location>
</feature>
<feature type="helix" evidence="11">
    <location>
        <begin position="152"/>
        <end position="156"/>
    </location>
</feature>
<feature type="helix" evidence="10">
    <location>
        <begin position="159"/>
        <end position="161"/>
    </location>
</feature>
<feature type="helix" evidence="11">
    <location>
        <begin position="163"/>
        <end position="183"/>
    </location>
</feature>
<feature type="helix" evidence="10">
    <location>
        <begin position="187"/>
        <end position="196"/>
    </location>
</feature>
<feature type="strand" evidence="10">
    <location>
        <begin position="199"/>
        <end position="201"/>
    </location>
</feature>
<feature type="strand" evidence="10">
    <location>
        <begin position="203"/>
        <end position="205"/>
    </location>
</feature>
<feature type="strand" evidence="12">
    <location>
        <begin position="237"/>
        <end position="241"/>
    </location>
</feature>
<sequence length="422" mass="49987">MKLLLQNQNIFQKLKNTLNGCIKKFYDTYQDLEQMQKFEMIVEDKLLFRYSCSQSEMFSAQIQAHYLEKRVLQLTDGNVKYIVNFRDKGVLDKANFFDTPNNSLVIIRQWSYEIYYTKNTFQINLVIDEMRCIDIITTIFYCKLELDFTQGIKGISKSSSFSNQIYEYSAQYYKAIQLLKKLLINDSYISELYNSTKSKQQPRLFIFQSFKPKMNLAEQNLSRQFEQCQQDDFGDGCLLQIVNYTHQSLKQIENKNNSNQIVNGQNEISKKKRVLKSNEDLYKISLQKQLKIFQEEEIELHSQSTIRNQTNQQLETFESDTSKRNSEKILHSINELNTSKQKVNQMNSSQHQIQKLENNNLNKNILNQINENDIKNELEERQQQHLTQSFNSKAQLKKIITLKKNQDILLFKPQEQEGSKKY</sequence>
<name>TAP50_TETTS</name>
<organism>
    <name type="scientific">Tetrahymena thermophila (strain SB210)</name>
    <dbReference type="NCBI Taxonomy" id="312017"/>
    <lineage>
        <taxon>Eukaryota</taxon>
        <taxon>Sar</taxon>
        <taxon>Alveolata</taxon>
        <taxon>Ciliophora</taxon>
        <taxon>Intramacronucleata</taxon>
        <taxon>Oligohymenophorea</taxon>
        <taxon>Hymenostomatida</taxon>
        <taxon>Tetrahymenina</taxon>
        <taxon>Tetrahymenidae</taxon>
        <taxon>Tetrahymena</taxon>
    </lineage>
</organism>
<protein>
    <recommendedName>
        <fullName evidence="6">Telomerase-associated protein of 50 kDa</fullName>
        <shortName evidence="6">p50</shortName>
    </recommendedName>
</protein>
<keyword id="KW-0002">3D-structure</keyword>
<keyword id="KW-0158">Chromosome</keyword>
<keyword id="KW-1185">Reference proteome</keyword>
<keyword id="KW-0779">Telomere</keyword>
<gene>
    <name evidence="6" type="primary">TAP50</name>
    <name evidence="8" type="ORF">TTHERM_01049190</name>
</gene>
<evidence type="ECO:0000269" key="1">
    <source>
    </source>
</evidence>
<evidence type="ECO:0000269" key="2">
    <source>
    </source>
</evidence>
<evidence type="ECO:0000269" key="3">
    <source>
    </source>
</evidence>
<evidence type="ECO:0000269" key="4">
    <source>
    </source>
</evidence>
<evidence type="ECO:0000269" key="5">
    <source>
    </source>
</evidence>
<evidence type="ECO:0000303" key="6">
    <source>
    </source>
</evidence>
<evidence type="ECO:0000305" key="7"/>
<evidence type="ECO:0000312" key="8">
    <source>
        <dbReference type="EMBL" id="EAS05269.4"/>
    </source>
</evidence>
<evidence type="ECO:0007829" key="9">
    <source>
        <dbReference type="PDB" id="7LMA"/>
    </source>
</evidence>
<evidence type="ECO:0007829" key="10">
    <source>
        <dbReference type="PDB" id="7UY5"/>
    </source>
</evidence>
<evidence type="ECO:0007829" key="11">
    <source>
        <dbReference type="PDB" id="7UY6"/>
    </source>
</evidence>
<evidence type="ECO:0007829" key="12">
    <source>
        <dbReference type="PDB" id="7X5C"/>
    </source>
</evidence>
<accession>D2CVN8</accession>
<accession>Q24BW8</accession>